<accession>P95689</accession>
<accession>Q2G2P9</accession>
<gene>
    <name type="primary">serS</name>
    <name type="ordered locus">SAOUHSC_00009</name>
</gene>
<name>SYS_STAA8</name>
<reference key="1">
    <citation type="journal article" date="1998" name="Biochim. Biophys. Acta">
        <title>Analysis and overexpression in Escherichia coli of a staphylococcal gene encoding seryl-tRNA synthetase.</title>
        <authorList>
            <person name="Bausch N."/>
            <person name="Seignovert L."/>
            <person name="Beaulande M."/>
            <person name="Leberman R."/>
            <person name="Hartlein M."/>
        </authorList>
    </citation>
    <scope>NUCLEOTIDE SEQUENCE [GENOMIC DNA]</scope>
    <scope>FUNCTION</scope>
</reference>
<reference key="2">
    <citation type="book" date="2006" name="Gram positive pathogens, 2nd edition">
        <title>The Staphylococcus aureus NCTC 8325 genome.</title>
        <editorList>
            <person name="Fischetti V."/>
            <person name="Novick R."/>
            <person name="Ferretti J."/>
            <person name="Portnoy D."/>
            <person name="Rood J."/>
        </editorList>
        <authorList>
            <person name="Gillaspy A.F."/>
            <person name="Worrell V."/>
            <person name="Orvis J."/>
            <person name="Roe B.A."/>
            <person name="Dyer D.W."/>
            <person name="Iandolo J.J."/>
        </authorList>
    </citation>
    <scope>NUCLEOTIDE SEQUENCE [LARGE SCALE GENOMIC DNA]</scope>
    <source>
        <strain>NCTC 8325 / PS 47</strain>
    </source>
</reference>
<sequence>MLDIRLFRNEPDTVKSKIELRGDDPKVVDEILELDEQRRKLISATEEMKARRNKVSEEIALKKRNKENADDVIAEMRTLGDDIKEKDSQLNEIDNKMTGILCRIPNLISDDVPQGESDEDNVEVKKWGTPREFSFEPKAHWDIVEELKMADFDRAAKVSGARFVYLTNEGAQLERALMNYMITKHTTQHGYTEMMVPQLVNADTMYGTGQLPKFEEDLFKVEKEGLYTIPTAEVPLTNFYRNEIIQPGVLPEKFTGQSACFRSEAGSAGRDTRGLIRLHQFDKVEMVRFEQPEDSWNALEEMTTNAEAILEELGLPYRRVILCTGDIGFSASKTYDLEVWLPSYNDYKEISSCSNCTDFQARRANIRFKRDKAAKPELAHTLNGSGLAVGRTFAAIVENYQNEDGTVTIPEALVPFMGGKTQISKPVK</sequence>
<keyword id="KW-0002">3D-structure</keyword>
<keyword id="KW-0030">Aminoacyl-tRNA synthetase</keyword>
<keyword id="KW-0067">ATP-binding</keyword>
<keyword id="KW-0963">Cytoplasm</keyword>
<keyword id="KW-0436">Ligase</keyword>
<keyword id="KW-0547">Nucleotide-binding</keyword>
<keyword id="KW-0648">Protein biosynthesis</keyword>
<keyword id="KW-1185">Reference proteome</keyword>
<comment type="function">
    <text evidence="2">Catalyzes the attachment of serine to tRNA(Ser). Is also probably able to aminoacylate tRNA(Sec) with serine, to form the misacylated tRNA L-seryl-tRNA(Sec), which will be further converted into selenocysteinyl-tRNA(Sec).</text>
</comment>
<comment type="catalytic activity">
    <reaction>
        <text>tRNA(Ser) + L-serine + ATP = L-seryl-tRNA(Ser) + AMP + diphosphate + H(+)</text>
        <dbReference type="Rhea" id="RHEA:12292"/>
        <dbReference type="Rhea" id="RHEA-COMP:9669"/>
        <dbReference type="Rhea" id="RHEA-COMP:9703"/>
        <dbReference type="ChEBI" id="CHEBI:15378"/>
        <dbReference type="ChEBI" id="CHEBI:30616"/>
        <dbReference type="ChEBI" id="CHEBI:33019"/>
        <dbReference type="ChEBI" id="CHEBI:33384"/>
        <dbReference type="ChEBI" id="CHEBI:78442"/>
        <dbReference type="ChEBI" id="CHEBI:78533"/>
        <dbReference type="ChEBI" id="CHEBI:456215"/>
        <dbReference type="EC" id="6.1.1.11"/>
    </reaction>
</comment>
<comment type="catalytic activity">
    <reaction>
        <text>tRNA(Sec) + L-serine + ATP = L-seryl-tRNA(Sec) + AMP + diphosphate + H(+)</text>
        <dbReference type="Rhea" id="RHEA:42580"/>
        <dbReference type="Rhea" id="RHEA-COMP:9742"/>
        <dbReference type="Rhea" id="RHEA-COMP:10128"/>
        <dbReference type="ChEBI" id="CHEBI:15378"/>
        <dbReference type="ChEBI" id="CHEBI:30616"/>
        <dbReference type="ChEBI" id="CHEBI:33019"/>
        <dbReference type="ChEBI" id="CHEBI:33384"/>
        <dbReference type="ChEBI" id="CHEBI:78442"/>
        <dbReference type="ChEBI" id="CHEBI:78533"/>
        <dbReference type="ChEBI" id="CHEBI:456215"/>
        <dbReference type="EC" id="6.1.1.11"/>
    </reaction>
</comment>
<comment type="pathway">
    <text>Aminoacyl-tRNA biosynthesis; selenocysteinyl-tRNA(Sec) biosynthesis; L-seryl-tRNA(Sec) from L-serine and tRNA(Sec): step 1/1.</text>
</comment>
<comment type="subunit">
    <text evidence="1">Homodimer. The tRNA molecule binds across the dimer (By similarity).</text>
</comment>
<comment type="subcellular location">
    <subcellularLocation>
        <location evidence="1">Cytoplasm</location>
    </subcellularLocation>
</comment>
<comment type="domain">
    <text evidence="1">Consists of two distinct domains, a catalytic core and a N-terminal extension that is involved in tRNA binding.</text>
</comment>
<comment type="similarity">
    <text evidence="3">Belongs to the class-II aminoacyl-tRNA synthetase family. Type-1 seryl-tRNA synthetase subfamily.</text>
</comment>
<proteinExistence type="evidence at protein level"/>
<organism>
    <name type="scientific">Staphylococcus aureus (strain NCTC 8325 / PS 47)</name>
    <dbReference type="NCBI Taxonomy" id="93061"/>
    <lineage>
        <taxon>Bacteria</taxon>
        <taxon>Bacillati</taxon>
        <taxon>Bacillota</taxon>
        <taxon>Bacilli</taxon>
        <taxon>Bacillales</taxon>
        <taxon>Staphylococcaceae</taxon>
        <taxon>Staphylococcus</taxon>
    </lineage>
</organism>
<evidence type="ECO:0000250" key="1"/>
<evidence type="ECO:0000269" key="2">
    <source>
    </source>
</evidence>
<evidence type="ECO:0000305" key="3"/>
<evidence type="ECO:0007829" key="4">
    <source>
        <dbReference type="PDB" id="6R1N"/>
    </source>
</evidence>
<feature type="chain" id="PRO_0000122123" description="Serine--tRNA ligase">
    <location>
        <begin position="1"/>
        <end position="428"/>
    </location>
</feature>
<feature type="binding site" evidence="1">
    <location>
        <begin position="231"/>
        <end position="233"/>
    </location>
    <ligand>
        <name>L-serine</name>
        <dbReference type="ChEBI" id="CHEBI:33384"/>
    </ligand>
</feature>
<feature type="binding site" evidence="1">
    <location>
        <begin position="262"/>
        <end position="264"/>
    </location>
    <ligand>
        <name>ATP</name>
        <dbReference type="ChEBI" id="CHEBI:30616"/>
    </ligand>
</feature>
<feature type="binding site" evidence="1">
    <location>
        <position position="285"/>
    </location>
    <ligand>
        <name>L-serine</name>
        <dbReference type="ChEBI" id="CHEBI:33384"/>
    </ligand>
</feature>
<feature type="binding site" evidence="1">
    <location>
        <begin position="349"/>
        <end position="352"/>
    </location>
    <ligand>
        <name>ATP</name>
        <dbReference type="ChEBI" id="CHEBI:30616"/>
    </ligand>
</feature>
<feature type="binding site" evidence="1">
    <location>
        <position position="385"/>
    </location>
    <ligand>
        <name>L-serine</name>
        <dbReference type="ChEBI" id="CHEBI:33384"/>
    </ligand>
</feature>
<feature type="helix" evidence="4">
    <location>
        <begin position="4"/>
        <end position="9"/>
    </location>
</feature>
<feature type="helix" evidence="4">
    <location>
        <begin position="11"/>
        <end position="20"/>
    </location>
</feature>
<feature type="helix" evidence="4">
    <location>
        <begin position="27"/>
        <end position="65"/>
    </location>
</feature>
<feature type="helix" evidence="4">
    <location>
        <begin position="71"/>
        <end position="101"/>
    </location>
</feature>
<feature type="helix" evidence="4">
    <location>
        <begin position="118"/>
        <end position="120"/>
    </location>
</feature>
<feature type="strand" evidence="4">
    <location>
        <begin position="122"/>
        <end position="128"/>
    </location>
</feature>
<feature type="helix" evidence="4">
    <location>
        <begin position="140"/>
        <end position="146"/>
    </location>
</feature>
<feature type="strand" evidence="4">
    <location>
        <begin position="149"/>
        <end position="152"/>
    </location>
</feature>
<feature type="helix" evidence="4">
    <location>
        <begin position="153"/>
        <end position="159"/>
    </location>
</feature>
<feature type="helix" evidence="4">
    <location>
        <begin position="169"/>
        <end position="187"/>
    </location>
</feature>
<feature type="strand" evidence="4">
    <location>
        <begin position="198"/>
        <end position="200"/>
    </location>
</feature>
<feature type="helix" evidence="4">
    <location>
        <begin position="202"/>
        <end position="207"/>
    </location>
</feature>
<feature type="turn" evidence="4">
    <location>
        <begin position="211"/>
        <end position="214"/>
    </location>
</feature>
<feature type="helix" evidence="4">
    <location>
        <begin position="215"/>
        <end position="217"/>
    </location>
</feature>
<feature type="turn" evidence="4">
    <location>
        <begin position="222"/>
        <end position="225"/>
    </location>
</feature>
<feature type="strand" evidence="4">
    <location>
        <begin position="226"/>
        <end position="228"/>
    </location>
</feature>
<feature type="helix" evidence="4">
    <location>
        <begin position="233"/>
        <end position="238"/>
    </location>
</feature>
<feature type="turn" evidence="4">
    <location>
        <begin position="239"/>
        <end position="242"/>
    </location>
</feature>
<feature type="strand" evidence="4">
    <location>
        <begin position="243"/>
        <end position="245"/>
    </location>
</feature>
<feature type="turn" evidence="4">
    <location>
        <begin position="247"/>
        <end position="249"/>
    </location>
</feature>
<feature type="strand" evidence="4">
    <location>
        <begin position="251"/>
        <end position="261"/>
    </location>
</feature>
<feature type="strand" evidence="4">
    <location>
        <begin position="273"/>
        <end position="277"/>
    </location>
</feature>
<feature type="strand" evidence="4">
    <location>
        <begin position="279"/>
        <end position="290"/>
    </location>
</feature>
<feature type="helix" evidence="4">
    <location>
        <begin position="292"/>
        <end position="294"/>
    </location>
</feature>
<feature type="helix" evidence="4">
    <location>
        <begin position="295"/>
        <end position="312"/>
    </location>
</feature>
<feature type="strand" evidence="4">
    <location>
        <begin position="317"/>
        <end position="321"/>
    </location>
</feature>
<feature type="turn" evidence="4">
    <location>
        <begin position="324"/>
        <end position="326"/>
    </location>
</feature>
<feature type="strand" evidence="4">
    <location>
        <begin position="332"/>
        <end position="340"/>
    </location>
</feature>
<feature type="turn" evidence="4">
    <location>
        <begin position="342"/>
        <end position="344"/>
    </location>
</feature>
<feature type="strand" evidence="4">
    <location>
        <begin position="345"/>
        <end position="355"/>
    </location>
</feature>
<feature type="helix" evidence="4">
    <location>
        <begin position="359"/>
        <end position="364"/>
    </location>
</feature>
<feature type="strand" evidence="4">
    <location>
        <begin position="366"/>
        <end position="368"/>
    </location>
</feature>
<feature type="strand" evidence="4">
    <location>
        <begin position="370"/>
        <end position="374"/>
    </location>
</feature>
<feature type="strand" evidence="4">
    <location>
        <begin position="380"/>
        <end position="388"/>
    </location>
</feature>
<feature type="helix" evidence="4">
    <location>
        <begin position="389"/>
        <end position="399"/>
    </location>
</feature>
<feature type="helix" evidence="4">
    <location>
        <begin position="411"/>
        <end position="417"/>
    </location>
</feature>
<dbReference type="EC" id="6.1.1.11"/>
<dbReference type="EMBL" id="Y09924">
    <property type="protein sequence ID" value="CAA71057.1"/>
    <property type="molecule type" value="Genomic_DNA"/>
</dbReference>
<dbReference type="EMBL" id="CP000253">
    <property type="protein sequence ID" value="ABD29200.1"/>
    <property type="molecule type" value="Genomic_DNA"/>
</dbReference>
<dbReference type="RefSeq" id="WP_000884334.1">
    <property type="nucleotide sequence ID" value="NZ_LS483365.1"/>
</dbReference>
<dbReference type="RefSeq" id="YP_498617.1">
    <property type="nucleotide sequence ID" value="NC_007795.1"/>
</dbReference>
<dbReference type="PDB" id="6R1N">
    <property type="method" value="X-ray"/>
    <property type="resolution" value="2.03 A"/>
    <property type="chains" value="A=1-428"/>
</dbReference>
<dbReference type="PDBsum" id="6R1N"/>
<dbReference type="SMR" id="P95689"/>
<dbReference type="STRING" id="93061.SAOUHSC_00009"/>
<dbReference type="BindingDB" id="P95689"/>
<dbReference type="ChEMBL" id="CHEMBL4523945"/>
<dbReference type="PaxDb" id="1280-SAXN108_0011"/>
<dbReference type="GeneID" id="3919182"/>
<dbReference type="KEGG" id="sao:SAOUHSC_00009"/>
<dbReference type="PATRIC" id="fig|93061.5.peg.9"/>
<dbReference type="eggNOG" id="COG0172">
    <property type="taxonomic scope" value="Bacteria"/>
</dbReference>
<dbReference type="HOGENOM" id="CLU_023797_1_1_9"/>
<dbReference type="OrthoDB" id="9804647at2"/>
<dbReference type="BRENDA" id="6.1.1.11">
    <property type="organism ID" value="3352"/>
</dbReference>
<dbReference type="UniPathway" id="UPA00906">
    <property type="reaction ID" value="UER00895"/>
</dbReference>
<dbReference type="PRO" id="PR:P95689"/>
<dbReference type="Proteomes" id="UP000008816">
    <property type="component" value="Chromosome"/>
</dbReference>
<dbReference type="GO" id="GO:0005737">
    <property type="term" value="C:cytoplasm"/>
    <property type="evidence" value="ECO:0007669"/>
    <property type="project" value="UniProtKB-SubCell"/>
</dbReference>
<dbReference type="GO" id="GO:0005524">
    <property type="term" value="F:ATP binding"/>
    <property type="evidence" value="ECO:0007669"/>
    <property type="project" value="UniProtKB-UniRule"/>
</dbReference>
<dbReference type="GO" id="GO:0140096">
    <property type="term" value="F:catalytic activity, acting on a protein"/>
    <property type="evidence" value="ECO:0007669"/>
    <property type="project" value="UniProtKB-ARBA"/>
</dbReference>
<dbReference type="GO" id="GO:0004828">
    <property type="term" value="F:serine-tRNA ligase activity"/>
    <property type="evidence" value="ECO:0007669"/>
    <property type="project" value="UniProtKB-UniRule"/>
</dbReference>
<dbReference type="GO" id="GO:0016740">
    <property type="term" value="F:transferase activity"/>
    <property type="evidence" value="ECO:0007669"/>
    <property type="project" value="UniProtKB-ARBA"/>
</dbReference>
<dbReference type="GO" id="GO:0016260">
    <property type="term" value="P:selenocysteine biosynthetic process"/>
    <property type="evidence" value="ECO:0007669"/>
    <property type="project" value="UniProtKB-UniRule"/>
</dbReference>
<dbReference type="GO" id="GO:0006434">
    <property type="term" value="P:seryl-tRNA aminoacylation"/>
    <property type="evidence" value="ECO:0007669"/>
    <property type="project" value="UniProtKB-UniRule"/>
</dbReference>
<dbReference type="CDD" id="cd00770">
    <property type="entry name" value="SerRS_core"/>
    <property type="match status" value="1"/>
</dbReference>
<dbReference type="Gene3D" id="3.30.930.10">
    <property type="entry name" value="Bira Bifunctional Protein, Domain 2"/>
    <property type="match status" value="1"/>
</dbReference>
<dbReference type="Gene3D" id="1.10.287.40">
    <property type="entry name" value="Serine-tRNA synthetase, tRNA binding domain"/>
    <property type="match status" value="1"/>
</dbReference>
<dbReference type="HAMAP" id="MF_00176">
    <property type="entry name" value="Ser_tRNA_synth_type1"/>
    <property type="match status" value="1"/>
</dbReference>
<dbReference type="InterPro" id="IPR002314">
    <property type="entry name" value="aa-tRNA-synt_IIb"/>
</dbReference>
<dbReference type="InterPro" id="IPR006195">
    <property type="entry name" value="aa-tRNA-synth_II"/>
</dbReference>
<dbReference type="InterPro" id="IPR045864">
    <property type="entry name" value="aa-tRNA-synth_II/BPL/LPL"/>
</dbReference>
<dbReference type="InterPro" id="IPR002317">
    <property type="entry name" value="Ser-tRNA-ligase_type_1"/>
</dbReference>
<dbReference type="InterPro" id="IPR015866">
    <property type="entry name" value="Ser-tRNA-synth_1_N"/>
</dbReference>
<dbReference type="InterPro" id="IPR042103">
    <property type="entry name" value="SerRS_1_N_sf"/>
</dbReference>
<dbReference type="InterPro" id="IPR033729">
    <property type="entry name" value="SerRS_core"/>
</dbReference>
<dbReference type="InterPro" id="IPR010978">
    <property type="entry name" value="tRNA-bd_arm"/>
</dbReference>
<dbReference type="NCBIfam" id="TIGR00414">
    <property type="entry name" value="serS"/>
    <property type="match status" value="1"/>
</dbReference>
<dbReference type="PANTHER" id="PTHR43697:SF1">
    <property type="entry name" value="SERINE--TRNA LIGASE"/>
    <property type="match status" value="1"/>
</dbReference>
<dbReference type="PANTHER" id="PTHR43697">
    <property type="entry name" value="SERYL-TRNA SYNTHETASE"/>
    <property type="match status" value="1"/>
</dbReference>
<dbReference type="Pfam" id="PF02403">
    <property type="entry name" value="Seryl_tRNA_N"/>
    <property type="match status" value="1"/>
</dbReference>
<dbReference type="Pfam" id="PF00587">
    <property type="entry name" value="tRNA-synt_2b"/>
    <property type="match status" value="1"/>
</dbReference>
<dbReference type="PIRSF" id="PIRSF001529">
    <property type="entry name" value="Ser-tRNA-synth_IIa"/>
    <property type="match status" value="1"/>
</dbReference>
<dbReference type="PRINTS" id="PR00981">
    <property type="entry name" value="TRNASYNTHSER"/>
</dbReference>
<dbReference type="SUPFAM" id="SSF55681">
    <property type="entry name" value="Class II aaRS and biotin synthetases"/>
    <property type="match status" value="1"/>
</dbReference>
<dbReference type="SUPFAM" id="SSF46589">
    <property type="entry name" value="tRNA-binding arm"/>
    <property type="match status" value="1"/>
</dbReference>
<dbReference type="PROSITE" id="PS50862">
    <property type="entry name" value="AA_TRNA_LIGASE_II"/>
    <property type="match status" value="1"/>
</dbReference>
<protein>
    <recommendedName>
        <fullName>Serine--tRNA ligase</fullName>
        <ecNumber>6.1.1.11</ecNumber>
    </recommendedName>
    <alternativeName>
        <fullName>Seryl-tRNA synthetase</fullName>
        <shortName>SerRS</shortName>
    </alternativeName>
    <alternativeName>
        <fullName>Seryl-tRNA(Ser/Sec) synthetase</fullName>
    </alternativeName>
</protein>